<dbReference type="EMBL" id="BA000012">
    <property type="protein sequence ID" value="BAB49667.1"/>
    <property type="molecule type" value="Genomic_DNA"/>
</dbReference>
<dbReference type="RefSeq" id="WP_008877613.1">
    <property type="nucleotide sequence ID" value="NC_002678.2"/>
</dbReference>
<dbReference type="SMR" id="Q98I49"/>
<dbReference type="GeneID" id="66682576"/>
<dbReference type="KEGG" id="mlo:mll2568"/>
<dbReference type="eggNOG" id="COG0782">
    <property type="taxonomic scope" value="Bacteria"/>
</dbReference>
<dbReference type="HOGENOM" id="CLU_101379_2_0_5"/>
<dbReference type="Proteomes" id="UP000000552">
    <property type="component" value="Chromosome"/>
</dbReference>
<dbReference type="GO" id="GO:0003677">
    <property type="term" value="F:DNA binding"/>
    <property type="evidence" value="ECO:0007669"/>
    <property type="project" value="UniProtKB-UniRule"/>
</dbReference>
<dbReference type="GO" id="GO:0070063">
    <property type="term" value="F:RNA polymerase binding"/>
    <property type="evidence" value="ECO:0007669"/>
    <property type="project" value="InterPro"/>
</dbReference>
<dbReference type="GO" id="GO:0006354">
    <property type="term" value="P:DNA-templated transcription elongation"/>
    <property type="evidence" value="ECO:0007669"/>
    <property type="project" value="TreeGrafter"/>
</dbReference>
<dbReference type="GO" id="GO:0032784">
    <property type="term" value="P:regulation of DNA-templated transcription elongation"/>
    <property type="evidence" value="ECO:0007669"/>
    <property type="project" value="UniProtKB-UniRule"/>
</dbReference>
<dbReference type="FunFam" id="1.10.287.180:FF:000001">
    <property type="entry name" value="Transcription elongation factor GreA"/>
    <property type="match status" value="1"/>
</dbReference>
<dbReference type="FunFam" id="3.10.50.30:FF:000001">
    <property type="entry name" value="Transcription elongation factor GreA"/>
    <property type="match status" value="1"/>
</dbReference>
<dbReference type="Gene3D" id="3.10.50.30">
    <property type="entry name" value="Transcription elongation factor, GreA/GreB, C-terminal domain"/>
    <property type="match status" value="1"/>
</dbReference>
<dbReference type="Gene3D" id="1.10.287.180">
    <property type="entry name" value="Transcription elongation factor, GreA/GreB, N-terminal domain"/>
    <property type="match status" value="1"/>
</dbReference>
<dbReference type="HAMAP" id="MF_00105">
    <property type="entry name" value="GreA_GreB"/>
    <property type="match status" value="1"/>
</dbReference>
<dbReference type="InterPro" id="IPR036953">
    <property type="entry name" value="GreA/GreB_C_sf"/>
</dbReference>
<dbReference type="InterPro" id="IPR018151">
    <property type="entry name" value="TF_GreA/GreB_CS"/>
</dbReference>
<dbReference type="InterPro" id="IPR006359">
    <property type="entry name" value="Tscrpt_elong_fac_GreA"/>
</dbReference>
<dbReference type="InterPro" id="IPR028624">
    <property type="entry name" value="Tscrpt_elong_fac_GreA/B"/>
</dbReference>
<dbReference type="InterPro" id="IPR001437">
    <property type="entry name" value="Tscrpt_elong_fac_GreA/B_C"/>
</dbReference>
<dbReference type="InterPro" id="IPR023459">
    <property type="entry name" value="Tscrpt_elong_fac_GreA/B_fam"/>
</dbReference>
<dbReference type="InterPro" id="IPR022691">
    <property type="entry name" value="Tscrpt_elong_fac_GreA/B_N"/>
</dbReference>
<dbReference type="InterPro" id="IPR036805">
    <property type="entry name" value="Tscrpt_elong_fac_GreA/B_N_sf"/>
</dbReference>
<dbReference type="NCBIfam" id="TIGR01462">
    <property type="entry name" value="greA"/>
    <property type="match status" value="1"/>
</dbReference>
<dbReference type="NCBIfam" id="NF001261">
    <property type="entry name" value="PRK00226.1-2"/>
    <property type="match status" value="1"/>
</dbReference>
<dbReference type="NCBIfam" id="NF001263">
    <property type="entry name" value="PRK00226.1-4"/>
    <property type="match status" value="1"/>
</dbReference>
<dbReference type="NCBIfam" id="NF001264">
    <property type="entry name" value="PRK00226.1-5"/>
    <property type="match status" value="1"/>
</dbReference>
<dbReference type="PANTHER" id="PTHR30437">
    <property type="entry name" value="TRANSCRIPTION ELONGATION FACTOR GREA"/>
    <property type="match status" value="1"/>
</dbReference>
<dbReference type="PANTHER" id="PTHR30437:SF4">
    <property type="entry name" value="TRANSCRIPTION ELONGATION FACTOR GREA"/>
    <property type="match status" value="1"/>
</dbReference>
<dbReference type="Pfam" id="PF01272">
    <property type="entry name" value="GreA_GreB"/>
    <property type="match status" value="1"/>
</dbReference>
<dbReference type="Pfam" id="PF03449">
    <property type="entry name" value="GreA_GreB_N"/>
    <property type="match status" value="1"/>
</dbReference>
<dbReference type="PIRSF" id="PIRSF006092">
    <property type="entry name" value="GreA_GreB"/>
    <property type="match status" value="1"/>
</dbReference>
<dbReference type="SUPFAM" id="SSF54534">
    <property type="entry name" value="FKBP-like"/>
    <property type="match status" value="1"/>
</dbReference>
<dbReference type="SUPFAM" id="SSF46557">
    <property type="entry name" value="GreA transcript cleavage protein, N-terminal domain"/>
    <property type="match status" value="1"/>
</dbReference>
<dbReference type="PROSITE" id="PS00829">
    <property type="entry name" value="GREAB_1"/>
    <property type="match status" value="1"/>
</dbReference>
<dbReference type="PROSITE" id="PS00830">
    <property type="entry name" value="GREAB_2"/>
    <property type="match status" value="1"/>
</dbReference>
<name>GREA_RHILO</name>
<feature type="chain" id="PRO_0000176959" description="Transcription elongation factor GreA">
    <location>
        <begin position="1"/>
        <end position="157"/>
    </location>
</feature>
<organism>
    <name type="scientific">Mesorhizobium japonicum (strain LMG 29417 / CECT 9101 / MAFF 303099)</name>
    <name type="common">Mesorhizobium loti (strain MAFF 303099)</name>
    <dbReference type="NCBI Taxonomy" id="266835"/>
    <lineage>
        <taxon>Bacteria</taxon>
        <taxon>Pseudomonadati</taxon>
        <taxon>Pseudomonadota</taxon>
        <taxon>Alphaproteobacteria</taxon>
        <taxon>Hyphomicrobiales</taxon>
        <taxon>Phyllobacteriaceae</taxon>
        <taxon>Mesorhizobium</taxon>
    </lineage>
</organism>
<accession>Q98I49</accession>
<protein>
    <recommendedName>
        <fullName evidence="1">Transcription elongation factor GreA</fullName>
    </recommendedName>
    <alternativeName>
        <fullName evidence="1">Transcript cleavage factor GreA</fullName>
    </alternativeName>
</protein>
<reference key="1">
    <citation type="journal article" date="2000" name="DNA Res.">
        <title>Complete genome structure of the nitrogen-fixing symbiotic bacterium Mesorhizobium loti.</title>
        <authorList>
            <person name="Kaneko T."/>
            <person name="Nakamura Y."/>
            <person name="Sato S."/>
            <person name="Asamizu E."/>
            <person name="Kato T."/>
            <person name="Sasamoto S."/>
            <person name="Watanabe A."/>
            <person name="Idesawa K."/>
            <person name="Ishikawa A."/>
            <person name="Kawashima K."/>
            <person name="Kimura T."/>
            <person name="Kishida Y."/>
            <person name="Kiyokawa C."/>
            <person name="Kohara M."/>
            <person name="Matsumoto M."/>
            <person name="Matsuno A."/>
            <person name="Mochizuki Y."/>
            <person name="Nakayama S."/>
            <person name="Nakazaki N."/>
            <person name="Shimpo S."/>
            <person name="Sugimoto M."/>
            <person name="Takeuchi C."/>
            <person name="Yamada M."/>
            <person name="Tabata S."/>
        </authorList>
    </citation>
    <scope>NUCLEOTIDE SEQUENCE [LARGE SCALE GENOMIC DNA]</scope>
    <source>
        <strain>LMG 29417 / CECT 9101 / MAFF 303099</strain>
    </source>
</reference>
<proteinExistence type="inferred from homology"/>
<comment type="function">
    <text evidence="1">Necessary for efficient RNA polymerase transcription elongation past template-encoded arresting sites. The arresting sites in DNA have the property of trapping a certain fraction of elongating RNA polymerases that pass through, resulting in locked ternary complexes. Cleavage of the nascent transcript by cleavage factors such as GreA or GreB allows the resumption of elongation from the new 3'terminus. GreA releases sequences of 2 to 3 nucleotides.</text>
</comment>
<comment type="similarity">
    <text evidence="1">Belongs to the GreA/GreB family.</text>
</comment>
<gene>
    <name evidence="1" type="primary">greA</name>
    <name type="ordered locus">mll2568</name>
</gene>
<evidence type="ECO:0000255" key="1">
    <source>
        <dbReference type="HAMAP-Rule" id="MF_00105"/>
    </source>
</evidence>
<keyword id="KW-0238">DNA-binding</keyword>
<keyword id="KW-0804">Transcription</keyword>
<keyword id="KW-0805">Transcription regulation</keyword>
<sequence>MNKVPMTGEGFASLKEELRWRQQEERPRIIEAISEARSHGDLSENAEYHAAKEAQSLNEGRVNELEDLIARAEVIDVTKLSGDKVKFGATVVLVDEDTEEKKTYQIVGDQEADVKSGRISISSPIARALIGKEVGDAIEVNAPGGARGYEIVQVQFI</sequence>